<accession>B7K5E6</accession>
<keyword id="KW-0067">ATP-binding</keyword>
<keyword id="KW-0093">Biotin biosynthesis</keyword>
<keyword id="KW-0963">Cytoplasm</keyword>
<keyword id="KW-0436">Ligase</keyword>
<keyword id="KW-0460">Magnesium</keyword>
<keyword id="KW-0479">Metal-binding</keyword>
<keyword id="KW-0547">Nucleotide-binding</keyword>
<keyword id="KW-1185">Reference proteome</keyword>
<name>BIOD_RIPO1</name>
<feature type="chain" id="PRO_1000119870" description="ATP-dependent dethiobiotin synthetase BioD">
    <location>
        <begin position="1"/>
        <end position="234"/>
    </location>
</feature>
<feature type="active site" evidence="2">
    <location>
        <position position="39"/>
    </location>
</feature>
<feature type="binding site" evidence="2">
    <location>
        <begin position="12"/>
        <end position="17"/>
    </location>
    <ligand>
        <name>ATP</name>
        <dbReference type="ChEBI" id="CHEBI:30616"/>
    </ligand>
</feature>
<feature type="binding site" evidence="2">
    <location>
        <position position="16"/>
    </location>
    <ligand>
        <name>Mg(2+)</name>
        <dbReference type="ChEBI" id="CHEBI:18420"/>
    </ligand>
</feature>
<feature type="binding site" evidence="2">
    <location>
        <position position="43"/>
    </location>
    <ligand>
        <name>substrate</name>
    </ligand>
</feature>
<feature type="binding site" evidence="2">
    <location>
        <position position="47"/>
    </location>
    <ligand>
        <name>ATP</name>
        <dbReference type="ChEBI" id="CHEBI:30616"/>
    </ligand>
</feature>
<feature type="binding site" evidence="2">
    <location>
        <position position="47"/>
    </location>
    <ligand>
        <name>Mg(2+)</name>
        <dbReference type="ChEBI" id="CHEBI:18420"/>
    </ligand>
</feature>
<feature type="binding site" evidence="2">
    <location>
        <begin position="108"/>
        <end position="111"/>
    </location>
    <ligand>
        <name>ATP</name>
        <dbReference type="ChEBI" id="CHEBI:30616"/>
    </ligand>
</feature>
<feature type="binding site" evidence="2">
    <location>
        <position position="108"/>
    </location>
    <ligand>
        <name>Mg(2+)</name>
        <dbReference type="ChEBI" id="CHEBI:18420"/>
    </ligand>
</feature>
<feature type="binding site" evidence="2">
    <location>
        <begin position="168"/>
        <end position="169"/>
    </location>
    <ligand>
        <name>ATP</name>
        <dbReference type="ChEBI" id="CHEBI:30616"/>
    </ligand>
</feature>
<feature type="binding site" evidence="2">
    <location>
        <begin position="200"/>
        <end position="202"/>
    </location>
    <ligand>
        <name>ATP</name>
        <dbReference type="ChEBI" id="CHEBI:30616"/>
    </ligand>
</feature>
<proteinExistence type="inferred from homology"/>
<organism>
    <name type="scientific">Rippkaea orientalis (strain PCC 8801 / RF-1)</name>
    <name type="common">Cyanothece sp. (strain PCC 8801)</name>
    <dbReference type="NCBI Taxonomy" id="41431"/>
    <lineage>
        <taxon>Bacteria</taxon>
        <taxon>Bacillati</taxon>
        <taxon>Cyanobacteriota</taxon>
        <taxon>Cyanophyceae</taxon>
        <taxon>Oscillatoriophycideae</taxon>
        <taxon>Chroococcales</taxon>
        <taxon>Aphanothecaceae</taxon>
        <taxon>Rippkaea</taxon>
        <taxon>Rippkaea orientalis</taxon>
    </lineage>
</organism>
<gene>
    <name evidence="2" type="primary">bioD</name>
    <name type="ordered locus">PCC8801_2678</name>
</gene>
<dbReference type="EC" id="6.3.3.3" evidence="2"/>
<dbReference type="EMBL" id="CP001287">
    <property type="protein sequence ID" value="ACK66679.1"/>
    <property type="molecule type" value="Genomic_DNA"/>
</dbReference>
<dbReference type="RefSeq" id="WP_012595946.1">
    <property type="nucleotide sequence ID" value="NC_011726.1"/>
</dbReference>
<dbReference type="SMR" id="B7K5E6"/>
<dbReference type="STRING" id="41431.PCC8801_2678"/>
<dbReference type="KEGG" id="cyp:PCC8801_2678"/>
<dbReference type="eggNOG" id="COG0132">
    <property type="taxonomic scope" value="Bacteria"/>
</dbReference>
<dbReference type="HOGENOM" id="CLU_072551_3_1_3"/>
<dbReference type="OrthoDB" id="9802097at2"/>
<dbReference type="UniPathway" id="UPA00078">
    <property type="reaction ID" value="UER00161"/>
</dbReference>
<dbReference type="Proteomes" id="UP000008204">
    <property type="component" value="Chromosome"/>
</dbReference>
<dbReference type="GO" id="GO:0005829">
    <property type="term" value="C:cytosol"/>
    <property type="evidence" value="ECO:0007669"/>
    <property type="project" value="TreeGrafter"/>
</dbReference>
<dbReference type="GO" id="GO:0005524">
    <property type="term" value="F:ATP binding"/>
    <property type="evidence" value="ECO:0007669"/>
    <property type="project" value="UniProtKB-UniRule"/>
</dbReference>
<dbReference type="GO" id="GO:0004141">
    <property type="term" value="F:dethiobiotin synthase activity"/>
    <property type="evidence" value="ECO:0007669"/>
    <property type="project" value="UniProtKB-UniRule"/>
</dbReference>
<dbReference type="GO" id="GO:0000287">
    <property type="term" value="F:magnesium ion binding"/>
    <property type="evidence" value="ECO:0007669"/>
    <property type="project" value="UniProtKB-UniRule"/>
</dbReference>
<dbReference type="GO" id="GO:0009102">
    <property type="term" value="P:biotin biosynthetic process"/>
    <property type="evidence" value="ECO:0007669"/>
    <property type="project" value="UniProtKB-UniRule"/>
</dbReference>
<dbReference type="CDD" id="cd03109">
    <property type="entry name" value="DTBS"/>
    <property type="match status" value="1"/>
</dbReference>
<dbReference type="Gene3D" id="3.40.50.300">
    <property type="entry name" value="P-loop containing nucleotide triphosphate hydrolases"/>
    <property type="match status" value="1"/>
</dbReference>
<dbReference type="HAMAP" id="MF_00336">
    <property type="entry name" value="BioD"/>
    <property type="match status" value="1"/>
</dbReference>
<dbReference type="InterPro" id="IPR004472">
    <property type="entry name" value="DTB_synth_BioD"/>
</dbReference>
<dbReference type="InterPro" id="IPR027417">
    <property type="entry name" value="P-loop_NTPase"/>
</dbReference>
<dbReference type="NCBIfam" id="TIGR00347">
    <property type="entry name" value="bioD"/>
    <property type="match status" value="1"/>
</dbReference>
<dbReference type="PANTHER" id="PTHR43210:SF2">
    <property type="entry name" value="ATP-DEPENDENT DETHIOBIOTIN SYNTHETASE BIOD 2"/>
    <property type="match status" value="1"/>
</dbReference>
<dbReference type="PANTHER" id="PTHR43210">
    <property type="entry name" value="DETHIOBIOTIN SYNTHETASE"/>
    <property type="match status" value="1"/>
</dbReference>
<dbReference type="Pfam" id="PF13500">
    <property type="entry name" value="AAA_26"/>
    <property type="match status" value="1"/>
</dbReference>
<dbReference type="PIRSF" id="PIRSF006755">
    <property type="entry name" value="DTB_synth"/>
    <property type="match status" value="1"/>
</dbReference>
<dbReference type="SUPFAM" id="SSF52540">
    <property type="entry name" value="P-loop containing nucleoside triphosphate hydrolases"/>
    <property type="match status" value="1"/>
</dbReference>
<sequence length="234" mass="25198">MNSLLITGTDTGAGKTIVTSALAAYWHKYYPSQRLGVIKLLQTGIGDHEHYQAMFAGQESVEVVCPLRFTTPVAPPIAAERENQPIPLEIVWKSLVSLQKSCDFVLAEGLGGLGSPVTWELTVADLAGEWRLPTVLVVPVKLGAIAQAVANVALARQTQVNLKGIILSCSHPLSPQELSDWAPMDLIQSLTGVPVLGVIPYLETIKDLDQLAKSASHLDLEPLISLDCRTQFLG</sequence>
<protein>
    <recommendedName>
        <fullName evidence="2">ATP-dependent dethiobiotin synthetase BioD</fullName>
        <ecNumber evidence="2">6.3.3.3</ecNumber>
    </recommendedName>
    <alternativeName>
        <fullName evidence="2">DTB synthetase</fullName>
        <shortName evidence="2">DTBS</shortName>
    </alternativeName>
    <alternativeName>
        <fullName evidence="2">Dethiobiotin synthase</fullName>
    </alternativeName>
</protein>
<evidence type="ECO:0000250" key="1">
    <source>
        <dbReference type="UniProtKB" id="Q55849"/>
    </source>
</evidence>
<evidence type="ECO:0000255" key="2">
    <source>
        <dbReference type="HAMAP-Rule" id="MF_00336"/>
    </source>
</evidence>
<evidence type="ECO:0000305" key="3"/>
<reference key="1">
    <citation type="journal article" date="2011" name="MBio">
        <title>Novel metabolic attributes of the genus Cyanothece, comprising a group of unicellular nitrogen-fixing Cyanobacteria.</title>
        <authorList>
            <person name="Bandyopadhyay A."/>
            <person name="Elvitigala T."/>
            <person name="Welsh E."/>
            <person name="Stockel J."/>
            <person name="Liberton M."/>
            <person name="Min H."/>
            <person name="Sherman L.A."/>
            <person name="Pakrasi H.B."/>
        </authorList>
    </citation>
    <scope>NUCLEOTIDE SEQUENCE [LARGE SCALE GENOMIC DNA]</scope>
    <source>
        <strain>PCC 8801 / RF-1</strain>
    </source>
</reference>
<comment type="function">
    <text evidence="1 2">Catalyzes a mechanistically unusual reaction, the ATP-dependent insertion of CO2 between the N7 and N8 nitrogen atoms of 7,8-diaminopelargonic acid (DAPA, also called 7,8-diammoniononanoate) to form a ureido ring (By similarity). This cyanobacterium does not encode bioA (which catalyzes the formation of the precursor for this reaction in the cannonical pathway), instead it encodes bioU, which replaces bioA and also performs the first half of the cannonical BioD reaction. Thus in this organism BioD has a different substrate (By similarity).</text>
</comment>
<comment type="catalytic activity">
    <reaction evidence="2">
        <text>(7R,8S)-7,8-diammoniononanoate + CO2 + ATP = (4R,5S)-dethiobiotin + ADP + phosphate + 3 H(+)</text>
        <dbReference type="Rhea" id="RHEA:15805"/>
        <dbReference type="ChEBI" id="CHEBI:15378"/>
        <dbReference type="ChEBI" id="CHEBI:16526"/>
        <dbReference type="ChEBI" id="CHEBI:30616"/>
        <dbReference type="ChEBI" id="CHEBI:43474"/>
        <dbReference type="ChEBI" id="CHEBI:149469"/>
        <dbReference type="ChEBI" id="CHEBI:149473"/>
        <dbReference type="ChEBI" id="CHEBI:456216"/>
        <dbReference type="EC" id="6.3.3.3"/>
    </reaction>
</comment>
<comment type="catalytic activity">
    <reaction evidence="1 3">
        <text>(7R,8S)-8-amino-7-(carboxyamino)nonanoate + ATP = (4R,5S)-dethiobiotin + ADP + phosphate + H(+)</text>
        <dbReference type="Rhea" id="RHEA:63684"/>
        <dbReference type="ChEBI" id="CHEBI:15378"/>
        <dbReference type="ChEBI" id="CHEBI:30616"/>
        <dbReference type="ChEBI" id="CHEBI:43474"/>
        <dbReference type="ChEBI" id="CHEBI:149470"/>
        <dbReference type="ChEBI" id="CHEBI:149473"/>
        <dbReference type="ChEBI" id="CHEBI:456216"/>
    </reaction>
</comment>
<comment type="cofactor">
    <cofactor evidence="2">
        <name>Mg(2+)</name>
        <dbReference type="ChEBI" id="CHEBI:18420"/>
    </cofactor>
</comment>
<comment type="pathway">
    <text evidence="2">Cofactor biosynthesis; biotin biosynthesis; biotin from 7,8-diaminononanoate: step 1/2.</text>
</comment>
<comment type="subunit">
    <text evidence="2">Homodimer.</text>
</comment>
<comment type="subcellular location">
    <subcellularLocation>
        <location evidence="2">Cytoplasm</location>
    </subcellularLocation>
</comment>
<comment type="similarity">
    <text evidence="2">Belongs to the dethiobiotin synthetase family.</text>
</comment>